<proteinExistence type="evidence at protein level"/>
<evidence type="ECO:0000256" key="1">
    <source>
        <dbReference type="SAM" id="MobiDB-lite"/>
    </source>
</evidence>
<evidence type="ECO:0000305" key="2"/>
<evidence type="ECO:0007744" key="3">
    <source>
    </source>
</evidence>
<gene>
    <name type="primary">MEA1</name>
    <name type="synonym">MEA</name>
</gene>
<protein>
    <recommendedName>
        <fullName>Male-enhanced antigen 1</fullName>
        <shortName>MEA-1</shortName>
    </recommendedName>
</protein>
<accession>Q16626</accession>
<accession>Q5TC36</accession>
<accession>Q9BV01</accession>
<dbReference type="EMBL" id="M27937">
    <property type="protein sequence ID" value="AAA36208.1"/>
    <property type="molecule type" value="mRNA"/>
</dbReference>
<dbReference type="EMBL" id="L10400">
    <property type="protein sequence ID" value="AAA36209.1"/>
    <property type="molecule type" value="mRNA"/>
</dbReference>
<dbReference type="EMBL" id="BT009831">
    <property type="protein sequence ID" value="AAP88833.1"/>
    <property type="molecule type" value="mRNA"/>
</dbReference>
<dbReference type="EMBL" id="AL136304">
    <property type="status" value="NOT_ANNOTATED_CDS"/>
    <property type="molecule type" value="Genomic_DNA"/>
</dbReference>
<dbReference type="EMBL" id="BC001754">
    <property type="protein sequence ID" value="AAH01754.1"/>
    <property type="molecule type" value="mRNA"/>
</dbReference>
<dbReference type="CCDS" id="CCDS4879.1"/>
<dbReference type="PIR" id="A34421">
    <property type="entry name" value="A34421"/>
</dbReference>
<dbReference type="RefSeq" id="NP_055438.1">
    <property type="nucleotide sequence ID" value="NM_014623.4"/>
</dbReference>
<dbReference type="BioGRID" id="110365">
    <property type="interactions" value="25"/>
</dbReference>
<dbReference type="FunCoup" id="Q16626">
    <property type="interactions" value="817"/>
</dbReference>
<dbReference type="IntAct" id="Q16626">
    <property type="interactions" value="17"/>
</dbReference>
<dbReference type="STRING" id="9606.ENSP00000495612"/>
<dbReference type="iPTMnet" id="Q16626"/>
<dbReference type="PhosphoSitePlus" id="Q16626"/>
<dbReference type="BioMuta" id="MEA1"/>
<dbReference type="DMDM" id="239938667"/>
<dbReference type="jPOST" id="Q16626"/>
<dbReference type="MassIVE" id="Q16626"/>
<dbReference type="PaxDb" id="9606-ENSP00000244711"/>
<dbReference type="PeptideAtlas" id="Q16626"/>
<dbReference type="ProteomicsDB" id="60973"/>
<dbReference type="Pumba" id="Q16626"/>
<dbReference type="Antibodypedia" id="16204">
    <property type="antibodies" value="97 antibodies from 21 providers"/>
</dbReference>
<dbReference type="DNASU" id="4201"/>
<dbReference type="Ensembl" id="ENST00000244711.4">
    <property type="protein sequence ID" value="ENSP00000244711.3"/>
    <property type="gene ID" value="ENSG00000124733.5"/>
</dbReference>
<dbReference type="GeneID" id="4201"/>
<dbReference type="KEGG" id="hsa:4201"/>
<dbReference type="MANE-Select" id="ENST00000244711.4">
    <property type="protein sequence ID" value="ENSP00000244711.3"/>
    <property type="RefSeq nucleotide sequence ID" value="NM_014623.4"/>
    <property type="RefSeq protein sequence ID" value="NP_055438.1"/>
</dbReference>
<dbReference type="UCSC" id="uc003otk.4">
    <property type="organism name" value="human"/>
</dbReference>
<dbReference type="AGR" id="HGNC:6986"/>
<dbReference type="CTD" id="4201"/>
<dbReference type="DisGeNET" id="4201"/>
<dbReference type="GeneCards" id="MEA1"/>
<dbReference type="HGNC" id="HGNC:6986">
    <property type="gene designation" value="MEA1"/>
</dbReference>
<dbReference type="HPA" id="ENSG00000124733">
    <property type="expression patterns" value="Low tissue specificity"/>
</dbReference>
<dbReference type="MalaCards" id="MEA1"/>
<dbReference type="MIM" id="143170">
    <property type="type" value="gene"/>
</dbReference>
<dbReference type="neXtProt" id="NX_Q16626"/>
<dbReference type="OpenTargets" id="ENSG00000124733"/>
<dbReference type="PharmGKB" id="PA30726"/>
<dbReference type="VEuPathDB" id="HostDB:ENSG00000124733"/>
<dbReference type="eggNOG" id="ENOG502S34Y">
    <property type="taxonomic scope" value="Eukaryota"/>
</dbReference>
<dbReference type="GeneTree" id="ENSGT00390000016927"/>
<dbReference type="HOGENOM" id="CLU_096511_0_0_1"/>
<dbReference type="InParanoid" id="Q16626"/>
<dbReference type="OMA" id="SIPMDPD"/>
<dbReference type="OrthoDB" id="5593200at2759"/>
<dbReference type="PAN-GO" id="Q16626">
    <property type="GO annotations" value="0 GO annotations based on evolutionary models"/>
</dbReference>
<dbReference type="PhylomeDB" id="Q16626"/>
<dbReference type="TreeFam" id="TF332365"/>
<dbReference type="PathwayCommons" id="Q16626"/>
<dbReference type="SignaLink" id="Q16626"/>
<dbReference type="BioGRID-ORCS" id="4201">
    <property type="hits" value="12 hits in 1151 CRISPR screens"/>
</dbReference>
<dbReference type="ChiTaRS" id="MEA1">
    <property type="organism name" value="human"/>
</dbReference>
<dbReference type="GenomeRNAi" id="4201"/>
<dbReference type="Pharos" id="Q16626">
    <property type="development level" value="Tbio"/>
</dbReference>
<dbReference type="PRO" id="PR:Q16626"/>
<dbReference type="Proteomes" id="UP000005640">
    <property type="component" value="Chromosome 6"/>
</dbReference>
<dbReference type="RNAct" id="Q16626">
    <property type="molecule type" value="protein"/>
</dbReference>
<dbReference type="Bgee" id="ENSG00000124733">
    <property type="expression patterns" value="Expressed in left testis and 216 other cell types or tissues"/>
</dbReference>
<dbReference type="ExpressionAtlas" id="Q16626">
    <property type="expression patterns" value="baseline and differential"/>
</dbReference>
<dbReference type="GO" id="GO:0005737">
    <property type="term" value="C:cytoplasm"/>
    <property type="evidence" value="ECO:0007669"/>
    <property type="project" value="Ensembl"/>
</dbReference>
<dbReference type="GO" id="GO:0030154">
    <property type="term" value="P:cell differentiation"/>
    <property type="evidence" value="ECO:0007669"/>
    <property type="project" value="UniProtKB-KW"/>
</dbReference>
<dbReference type="GO" id="GO:0008584">
    <property type="term" value="P:male gonad development"/>
    <property type="evidence" value="ECO:0000304"/>
    <property type="project" value="ProtInc"/>
</dbReference>
<dbReference type="GO" id="GO:0007283">
    <property type="term" value="P:spermatogenesis"/>
    <property type="evidence" value="ECO:0000304"/>
    <property type="project" value="ProtInc"/>
</dbReference>
<dbReference type="InterPro" id="IPR009685">
    <property type="entry name" value="MEA1"/>
</dbReference>
<dbReference type="PANTHER" id="PTHR17005">
    <property type="entry name" value="MALE-ENHANCED ANTIGEN-1"/>
    <property type="match status" value="1"/>
</dbReference>
<dbReference type="Pfam" id="PF06910">
    <property type="entry name" value="MEA1"/>
    <property type="match status" value="1"/>
</dbReference>
<comment type="function">
    <text>May play an important role in spermatogenesis and/or testis development.</text>
</comment>
<comment type="interaction">
    <interactant intactId="EBI-744921">
        <id>Q16626</id>
    </interactant>
    <interactant intactId="EBI-541426">
        <id>Q9BXS5</id>
        <label>AP1M1</label>
    </interactant>
    <organismsDiffer>false</organismsDiffer>
    <experiments>5</experiments>
</comment>
<comment type="interaction">
    <interactant intactId="EBI-744921">
        <id>Q16626</id>
    </interactant>
    <interactant intactId="EBI-432924">
        <id>P63010</id>
        <label>AP2B1</label>
    </interactant>
    <organismsDiffer>false</organismsDiffer>
    <experiments>4</experiments>
</comment>
<comment type="tissue specificity">
    <text>Highly expressed in testis.</text>
</comment>
<comment type="caution">
    <text evidence="2">Was originally thought to be the H-Y antigen.</text>
</comment>
<comment type="caution">
    <text evidence="2">It is uncertain whether Met-1, Met-14 or Met-24 is the initiator.</text>
</comment>
<reference key="1">
    <citation type="journal article" date="1989" name="Proc. Natl. Acad. Sci. U.S.A.">
        <title>Male-enhanced antigen gene is phylogenetically conserved and expressed at late stages of spermatogenesis.</title>
        <authorList>
            <person name="Lau Y.-F.C."/>
            <person name="Chan K."/>
            <person name="Sparkes R.S."/>
        </authorList>
    </citation>
    <scope>NUCLEOTIDE SEQUENCE [MRNA]</scope>
    <source>
        <tissue>Testis</tissue>
    </source>
</reference>
<reference key="2">
    <citation type="submission" date="2003-08" db="EMBL/GenBank/DDBJ databases">
        <title>Cloning of human full-length CDSs in BD Creator(TM) system donor vector.</title>
        <authorList>
            <person name="Kalnine N."/>
            <person name="Chen X."/>
            <person name="Rolfs A."/>
            <person name="Halleck A."/>
            <person name="Hines L."/>
            <person name="Eisenstein S."/>
            <person name="Koundinya M."/>
            <person name="Raphael J."/>
            <person name="Moreira D."/>
            <person name="Kelley T."/>
            <person name="LaBaer J."/>
            <person name="Lin Y."/>
            <person name="Phelan M."/>
            <person name="Farmer A."/>
        </authorList>
    </citation>
    <scope>NUCLEOTIDE SEQUENCE [LARGE SCALE MRNA]</scope>
</reference>
<reference key="3">
    <citation type="journal article" date="2003" name="Nature">
        <title>The DNA sequence and analysis of human chromosome 6.</title>
        <authorList>
            <person name="Mungall A.J."/>
            <person name="Palmer S.A."/>
            <person name="Sims S.K."/>
            <person name="Edwards C.A."/>
            <person name="Ashurst J.L."/>
            <person name="Wilming L."/>
            <person name="Jones M.C."/>
            <person name="Horton R."/>
            <person name="Hunt S.E."/>
            <person name="Scott C.E."/>
            <person name="Gilbert J.G.R."/>
            <person name="Clamp M.E."/>
            <person name="Bethel G."/>
            <person name="Milne S."/>
            <person name="Ainscough R."/>
            <person name="Almeida J.P."/>
            <person name="Ambrose K.D."/>
            <person name="Andrews T.D."/>
            <person name="Ashwell R.I.S."/>
            <person name="Babbage A.K."/>
            <person name="Bagguley C.L."/>
            <person name="Bailey J."/>
            <person name="Banerjee R."/>
            <person name="Barker D.J."/>
            <person name="Barlow K.F."/>
            <person name="Bates K."/>
            <person name="Beare D.M."/>
            <person name="Beasley H."/>
            <person name="Beasley O."/>
            <person name="Bird C.P."/>
            <person name="Blakey S.E."/>
            <person name="Bray-Allen S."/>
            <person name="Brook J."/>
            <person name="Brown A.J."/>
            <person name="Brown J.Y."/>
            <person name="Burford D.C."/>
            <person name="Burrill W."/>
            <person name="Burton J."/>
            <person name="Carder C."/>
            <person name="Carter N.P."/>
            <person name="Chapman J.C."/>
            <person name="Clark S.Y."/>
            <person name="Clark G."/>
            <person name="Clee C.M."/>
            <person name="Clegg S."/>
            <person name="Cobley V."/>
            <person name="Collier R.E."/>
            <person name="Collins J.E."/>
            <person name="Colman L.K."/>
            <person name="Corby N.R."/>
            <person name="Coville G.J."/>
            <person name="Culley K.M."/>
            <person name="Dhami P."/>
            <person name="Davies J."/>
            <person name="Dunn M."/>
            <person name="Earthrowl M.E."/>
            <person name="Ellington A.E."/>
            <person name="Evans K.A."/>
            <person name="Faulkner L."/>
            <person name="Francis M.D."/>
            <person name="Frankish A."/>
            <person name="Frankland J."/>
            <person name="French L."/>
            <person name="Garner P."/>
            <person name="Garnett J."/>
            <person name="Ghori M.J."/>
            <person name="Gilby L.M."/>
            <person name="Gillson C.J."/>
            <person name="Glithero R.J."/>
            <person name="Grafham D.V."/>
            <person name="Grant M."/>
            <person name="Gribble S."/>
            <person name="Griffiths C."/>
            <person name="Griffiths M.N.D."/>
            <person name="Hall R."/>
            <person name="Halls K.S."/>
            <person name="Hammond S."/>
            <person name="Harley J.L."/>
            <person name="Hart E.A."/>
            <person name="Heath P.D."/>
            <person name="Heathcott R."/>
            <person name="Holmes S.J."/>
            <person name="Howden P.J."/>
            <person name="Howe K.L."/>
            <person name="Howell G.R."/>
            <person name="Huckle E."/>
            <person name="Humphray S.J."/>
            <person name="Humphries M.D."/>
            <person name="Hunt A.R."/>
            <person name="Johnson C.M."/>
            <person name="Joy A.A."/>
            <person name="Kay M."/>
            <person name="Keenan S.J."/>
            <person name="Kimberley A.M."/>
            <person name="King A."/>
            <person name="Laird G.K."/>
            <person name="Langford C."/>
            <person name="Lawlor S."/>
            <person name="Leongamornlert D.A."/>
            <person name="Leversha M."/>
            <person name="Lloyd C.R."/>
            <person name="Lloyd D.M."/>
            <person name="Loveland J.E."/>
            <person name="Lovell J."/>
            <person name="Martin S."/>
            <person name="Mashreghi-Mohammadi M."/>
            <person name="Maslen G.L."/>
            <person name="Matthews L."/>
            <person name="McCann O.T."/>
            <person name="McLaren S.J."/>
            <person name="McLay K."/>
            <person name="McMurray A."/>
            <person name="Moore M.J.F."/>
            <person name="Mullikin J.C."/>
            <person name="Niblett D."/>
            <person name="Nickerson T."/>
            <person name="Novik K.L."/>
            <person name="Oliver K."/>
            <person name="Overton-Larty E.K."/>
            <person name="Parker A."/>
            <person name="Patel R."/>
            <person name="Pearce A.V."/>
            <person name="Peck A.I."/>
            <person name="Phillimore B.J.C.T."/>
            <person name="Phillips S."/>
            <person name="Plumb R.W."/>
            <person name="Porter K.M."/>
            <person name="Ramsey Y."/>
            <person name="Ranby S.A."/>
            <person name="Rice C.M."/>
            <person name="Ross M.T."/>
            <person name="Searle S.M."/>
            <person name="Sehra H.K."/>
            <person name="Sheridan E."/>
            <person name="Skuce C.D."/>
            <person name="Smith S."/>
            <person name="Smith M."/>
            <person name="Spraggon L."/>
            <person name="Squares S.L."/>
            <person name="Steward C.A."/>
            <person name="Sycamore N."/>
            <person name="Tamlyn-Hall G."/>
            <person name="Tester J."/>
            <person name="Theaker A.J."/>
            <person name="Thomas D.W."/>
            <person name="Thorpe A."/>
            <person name="Tracey A."/>
            <person name="Tromans A."/>
            <person name="Tubby B."/>
            <person name="Wall M."/>
            <person name="Wallis J.M."/>
            <person name="West A.P."/>
            <person name="White S.S."/>
            <person name="Whitehead S.L."/>
            <person name="Whittaker H."/>
            <person name="Wild A."/>
            <person name="Willey D.J."/>
            <person name="Wilmer T.E."/>
            <person name="Wood J.M."/>
            <person name="Wray P.W."/>
            <person name="Wyatt J.C."/>
            <person name="Young L."/>
            <person name="Younger R.M."/>
            <person name="Bentley D.R."/>
            <person name="Coulson A."/>
            <person name="Durbin R.M."/>
            <person name="Hubbard T."/>
            <person name="Sulston J.E."/>
            <person name="Dunham I."/>
            <person name="Rogers J."/>
            <person name="Beck S."/>
        </authorList>
    </citation>
    <scope>NUCLEOTIDE SEQUENCE [LARGE SCALE GENOMIC DNA]</scope>
</reference>
<reference key="4">
    <citation type="journal article" date="2004" name="Genome Res.">
        <title>The status, quality, and expansion of the NIH full-length cDNA project: the Mammalian Gene Collection (MGC).</title>
        <authorList>
            <consortium name="The MGC Project Team"/>
        </authorList>
    </citation>
    <scope>NUCLEOTIDE SEQUENCE [LARGE SCALE MRNA]</scope>
    <source>
        <tissue>Eye</tissue>
    </source>
</reference>
<reference key="5">
    <citation type="journal article" date="2008" name="Mol. Cell">
        <title>Kinase-selective enrichment enables quantitative phosphoproteomics of the kinome across the cell cycle.</title>
        <authorList>
            <person name="Daub H."/>
            <person name="Olsen J.V."/>
            <person name="Bairlein M."/>
            <person name="Gnad F."/>
            <person name="Oppermann F.S."/>
            <person name="Korner R."/>
            <person name="Greff Z."/>
            <person name="Keri G."/>
            <person name="Stemmann O."/>
            <person name="Mann M."/>
        </authorList>
    </citation>
    <scope>PHOSPHORYLATION [LARGE SCALE ANALYSIS] AT SER-114</scope>
    <scope>IDENTIFICATION BY MASS SPECTROMETRY [LARGE SCALE ANALYSIS]</scope>
    <source>
        <tissue>Cervix carcinoma</tissue>
    </source>
</reference>
<reference key="6">
    <citation type="journal article" date="2008" name="Proc. Natl. Acad. Sci. U.S.A.">
        <title>A quantitative atlas of mitotic phosphorylation.</title>
        <authorList>
            <person name="Dephoure N."/>
            <person name="Zhou C."/>
            <person name="Villen J."/>
            <person name="Beausoleil S.A."/>
            <person name="Bakalarski C.E."/>
            <person name="Elledge S.J."/>
            <person name="Gygi S.P."/>
        </authorList>
    </citation>
    <scope>IDENTIFICATION BY MASS SPECTROMETRY [LARGE SCALE ANALYSIS]</scope>
    <source>
        <tissue>Cervix carcinoma</tissue>
    </source>
</reference>
<reference key="7">
    <citation type="journal article" date="2013" name="J. Proteome Res.">
        <title>Toward a comprehensive characterization of a human cancer cell phosphoproteome.</title>
        <authorList>
            <person name="Zhou H."/>
            <person name="Di Palma S."/>
            <person name="Preisinger C."/>
            <person name="Peng M."/>
            <person name="Polat A.N."/>
            <person name="Heck A.J."/>
            <person name="Mohammed S."/>
        </authorList>
    </citation>
    <scope>IDENTIFICATION BY MASS SPECTROMETRY [LARGE SCALE ANALYSIS]</scope>
    <source>
        <tissue>Erythroleukemia</tissue>
    </source>
</reference>
<reference key="8">
    <citation type="journal article" date="2014" name="J. Proteomics">
        <title>An enzyme assisted RP-RPLC approach for in-depth analysis of human liver phosphoproteome.</title>
        <authorList>
            <person name="Bian Y."/>
            <person name="Song C."/>
            <person name="Cheng K."/>
            <person name="Dong M."/>
            <person name="Wang F."/>
            <person name="Huang J."/>
            <person name="Sun D."/>
            <person name="Wang L."/>
            <person name="Ye M."/>
            <person name="Zou H."/>
        </authorList>
    </citation>
    <scope>IDENTIFICATION BY MASS SPECTROMETRY [LARGE SCALE ANALYSIS]</scope>
    <source>
        <tissue>Liver</tissue>
    </source>
</reference>
<sequence>MGPERHLSGAPARMATVVLGGDTMGPERIFPNQTEELGHQGPSEGTGDWSSEEPEEEQEETGSGPAGYSYQPLNQDPEQEEVELAPVGDGDVVADIQDRIQALGLHLPDPPLESEDEDEEGATALNNHSSIPMDPEHVELVKRTMAGVSLPAPGVPAWAREISDAQWEDVVQKALQARQASPAWK</sequence>
<name>MEA1_HUMAN</name>
<feature type="chain" id="PRO_0000096341" description="Male-enhanced antigen 1">
    <location>
        <begin position="1"/>
        <end position="185"/>
    </location>
</feature>
<feature type="region of interest" description="Disordered" evidence="1">
    <location>
        <begin position="1"/>
        <end position="90"/>
    </location>
</feature>
<feature type="region of interest" description="Disordered" evidence="1">
    <location>
        <begin position="104"/>
        <end position="134"/>
    </location>
</feature>
<feature type="compositionally biased region" description="Acidic residues" evidence="1">
    <location>
        <begin position="50"/>
        <end position="60"/>
    </location>
</feature>
<feature type="compositionally biased region" description="Acidic residues" evidence="1">
    <location>
        <begin position="112"/>
        <end position="121"/>
    </location>
</feature>
<feature type="modified residue" description="Phosphoserine" evidence="3">
    <location>
        <position position="114"/>
    </location>
</feature>
<feature type="sequence variant" id="VAR_058297" description="In dbSNP:rs11751058.">
    <original>A</original>
    <variation>D</variation>
    <location>
        <position position="183"/>
    </location>
</feature>
<keyword id="KW-0217">Developmental protein</keyword>
<keyword id="KW-0221">Differentiation</keyword>
<keyword id="KW-0597">Phosphoprotein</keyword>
<keyword id="KW-1267">Proteomics identification</keyword>
<keyword id="KW-1185">Reference proteome</keyword>
<keyword id="KW-0744">Spermatogenesis</keyword>
<organism>
    <name type="scientific">Homo sapiens</name>
    <name type="common">Human</name>
    <dbReference type="NCBI Taxonomy" id="9606"/>
    <lineage>
        <taxon>Eukaryota</taxon>
        <taxon>Metazoa</taxon>
        <taxon>Chordata</taxon>
        <taxon>Craniata</taxon>
        <taxon>Vertebrata</taxon>
        <taxon>Euteleostomi</taxon>
        <taxon>Mammalia</taxon>
        <taxon>Eutheria</taxon>
        <taxon>Euarchontoglires</taxon>
        <taxon>Primates</taxon>
        <taxon>Haplorrhini</taxon>
        <taxon>Catarrhini</taxon>
        <taxon>Hominidae</taxon>
        <taxon>Homo</taxon>
    </lineage>
</organism>